<reference key="1">
    <citation type="journal article" date="2000" name="J. Virol.">
        <title>Early alterations of the receptor-binding properties of H1, H2, and H3 avian influenza virus hemagglutinins after their introduction into mammals.</title>
        <authorList>
            <person name="Matrosovich M."/>
            <person name="Tuzikov A."/>
            <person name="Bovin N."/>
            <person name="Gambaryan A."/>
            <person name="Klimov A."/>
            <person name="Castrucci M.R."/>
            <person name="Donatelli I."/>
            <person name="Kawaoka Y."/>
        </authorList>
    </citation>
    <scope>NUCLEOTIDE SEQUENCE [GENOMIC RNA]</scope>
</reference>
<organismHost>
    <name type="scientific">Aves</name>
    <dbReference type="NCBI Taxonomy" id="8782"/>
</organismHost>
<organismHost>
    <name type="scientific">Homo sapiens</name>
    <name type="common">Human</name>
    <dbReference type="NCBI Taxonomy" id="9606"/>
</organismHost>
<organism>
    <name type="scientific">Influenza A virus (strain A/Ann Arbor/6/1960 H2N2)</name>
    <dbReference type="NCBI Taxonomy" id="384498"/>
    <lineage>
        <taxon>Viruses</taxon>
        <taxon>Riboviria</taxon>
        <taxon>Orthornavirae</taxon>
        <taxon>Negarnaviricota</taxon>
        <taxon>Polyploviricotina</taxon>
        <taxon>Insthoviricetes</taxon>
        <taxon>Articulavirales</taxon>
        <taxon>Orthomyxoviridae</taxon>
        <taxon>Alphainfluenzavirus</taxon>
        <taxon>Alphainfluenzavirus influenzae</taxon>
        <taxon>Influenza A virus</taxon>
    </lineage>
</organism>
<accession>Q9IFF7</accession>
<protein>
    <recommendedName>
        <fullName>Hemagglutinin</fullName>
    </recommendedName>
    <component>
        <recommendedName>
            <fullName>Hemagglutinin HA1 chain</fullName>
        </recommendedName>
    </component>
</protein>
<evidence type="ECO:0000250" key="1"/>
<evidence type="ECO:0000255" key="2"/>
<evidence type="ECO:0000305" key="3"/>
<proteinExistence type="inferred from homology"/>
<comment type="function">
    <text evidence="1">Binds to sialic acid-containing receptors on the cell surface, bringing about the attachment of the virus particle to the cell. This attachment induces virion internalization of about two third of the virus particles through clathrin-dependent endocytosis and about one third through a clathrin- and caveolin-independent pathway. Plays a major role in the determination of host range restriction and virulence. Class I viral fusion protein. Responsible for penetration of the virus into the cell cytoplasm by mediating the fusion of the membrane of the endocytosed virus particle with the endosomal membrane. Low pH in endosomes induces an irreversible conformational change in HA2, releasing the fusion hydrophobic peptide. Several trimers are required to form a competent fusion pore (By similarity).</text>
</comment>
<comment type="subunit">
    <text evidence="1">Homotrimer of disulfide-linked HA1-HA2.</text>
</comment>
<comment type="subcellular location">
    <subcellularLocation>
        <location evidence="3">Virion membrane</location>
        <topology evidence="3">Single-pass type I membrane protein</topology>
    </subcellularLocation>
    <subcellularLocation>
        <location>Host apical cell membrane</location>
        <topology>Single-pass type I membrane protein</topology>
    </subcellularLocation>
    <text evidence="1">Targeted to the apical plasma membrane in epithelial polarized cells through a signal present in the transmembrane domain. Associated with glycosphingolipid- and cholesterol-enriched detergent-resistant lipid rafts (By similarity).</text>
</comment>
<comment type="PTM">
    <text evidence="1">In natural infection, inactive HA is matured into HA1 and HA2 outside the cell by one or more trypsin-like, arginine-specific endoprotease secreted by the bronchial epithelial cells. One identified protease that may be involved in this process is secreted in lungs by club cells (By similarity).</text>
</comment>
<comment type="PTM">
    <text evidence="1">Palmitoylated.</text>
</comment>
<comment type="miscellaneous">
    <text>Major glycoprotein, comprises over 80% of the envelope proteins present in virus particle.</text>
</comment>
<comment type="miscellaneous">
    <text>The extent of infection into host organism is determined by HA. Influenza viruses bud from the apical surface of polarized epithelial cells (e.g. bronchial epithelial cells) into lumen of lungs and are therefore usually pneumotropic. The reason is that HA is cleaved by tryptase clara which is restricted to lungs. However, HAs of H5 and H7 pantropic avian viruses subtypes can be cleaved by furin and subtilisin-type enzymes, allowing the virus to grow in other organs than lungs.</text>
</comment>
<comment type="miscellaneous">
    <text>The influenza A genome consist of 8 RNA segments. Genetic variation of hemagglutinin and/or neuraminidase genes results in the emergence of new influenza strains. The mechanism of variation can be the result of point mutations or the result of genetic reassortment between segments of two different strains.</text>
</comment>
<comment type="similarity">
    <text evidence="3">Belongs to the influenza viruses hemagglutinin family.</text>
</comment>
<gene>
    <name type="primary">HA</name>
</gene>
<feature type="signal peptide" evidence="2">
    <location>
        <begin position="1"/>
        <end position="15"/>
    </location>
</feature>
<feature type="chain" id="PRO_0000318719" description="Hemagglutinin HA1 chain">
    <location>
        <begin position="16"/>
        <end position="339"/>
    </location>
</feature>
<feature type="topological domain" description="Extracellular" evidence="2">
    <location>
        <begin position="16"/>
        <end position="339" status="greater than"/>
    </location>
</feature>
<feature type="glycosylation site" description="N-linked (GlcNAc...) asparagine; by host" evidence="2">
    <location>
        <position position="25"/>
    </location>
</feature>
<feature type="glycosylation site" description="N-linked (GlcNAc...) asparagine; by host" evidence="2">
    <location>
        <position position="26"/>
    </location>
</feature>
<feature type="glycosylation site" description="N-linked (GlcNAc...) asparagine; by host" evidence="2">
    <location>
        <position position="38"/>
    </location>
</feature>
<feature type="glycosylation site" description="N-linked (GlcNAc...) asparagine; by host" evidence="2">
    <location>
        <position position="179"/>
    </location>
</feature>
<feature type="glycosylation site" description="N-linked (GlcNAc...) asparagine; by host" evidence="2">
    <location>
        <position position="180"/>
    </location>
</feature>
<feature type="glycosylation site" description="N-linked (GlcNAc...) asparagine; by host" evidence="2">
    <location>
        <position position="300"/>
    </location>
</feature>
<feature type="disulfide bond" evidence="1">
    <location>
        <begin position="57"/>
        <end position="288"/>
    </location>
</feature>
<feature type="disulfide bond" evidence="1">
    <location>
        <begin position="70"/>
        <end position="82"/>
    </location>
</feature>
<feature type="disulfide bond" evidence="1">
    <location>
        <begin position="105"/>
        <end position="149"/>
    </location>
</feature>
<feature type="disulfide bond" evidence="1">
    <location>
        <begin position="292"/>
        <end position="316"/>
    </location>
</feature>
<feature type="non-terminal residue">
    <location>
        <position position="339"/>
    </location>
</feature>
<sequence>MAIIYLILLFTAVRGDQICIGYHANNSTETVDTILERNVTVTHAKDILEKTHNGKLCKLNGIPPLELGDCSIAGWLLGNPECDRLLSVPEWSYIMEKENPRNGLCYPGNFNDYEELKHLLSSVKHFEKVKILPKDRWTQHTTTGGSQACAVSGNPSFFRNMVWLTEKESNYPVAKGSYNNTSGEQMLIIWGVHHPIDEKEQRTLYQNVGTYVSVGTSTLNKRSTPEIATRPKVNGLGSRMEFSWTLLDMWDTITFESTGNLIAPEYGFKISKRGSSGIMKTEGTLENCETKCQTPLGAINTTLPFHNVHPLTIGECPKYVKSEKLVLATGLRNVPQIES</sequence>
<dbReference type="EMBL" id="AF270721">
    <property type="protein sequence ID" value="AAF82105.1"/>
    <property type="molecule type" value="Genomic_RNA"/>
</dbReference>
<dbReference type="SMR" id="Q9IFF7"/>
<dbReference type="GlyCosmos" id="Q9IFF7">
    <property type="glycosylation" value="6 sites, No reported glycans"/>
</dbReference>
<dbReference type="GO" id="GO:0020002">
    <property type="term" value="C:host cell plasma membrane"/>
    <property type="evidence" value="ECO:0007669"/>
    <property type="project" value="UniProtKB-SubCell"/>
</dbReference>
<dbReference type="GO" id="GO:0016020">
    <property type="term" value="C:membrane"/>
    <property type="evidence" value="ECO:0007669"/>
    <property type="project" value="UniProtKB-KW"/>
</dbReference>
<dbReference type="GO" id="GO:0019031">
    <property type="term" value="C:viral envelope"/>
    <property type="evidence" value="ECO:0007669"/>
    <property type="project" value="UniProtKB-KW"/>
</dbReference>
<dbReference type="GO" id="GO:0055036">
    <property type="term" value="C:virion membrane"/>
    <property type="evidence" value="ECO:0007669"/>
    <property type="project" value="UniProtKB-SubCell"/>
</dbReference>
<dbReference type="GO" id="GO:0046789">
    <property type="term" value="F:host cell surface receptor binding"/>
    <property type="evidence" value="ECO:0007669"/>
    <property type="project" value="InterPro"/>
</dbReference>
<dbReference type="GO" id="GO:0075512">
    <property type="term" value="P:clathrin-dependent endocytosis of virus by host cell"/>
    <property type="evidence" value="ECO:0007669"/>
    <property type="project" value="UniProtKB-KW"/>
</dbReference>
<dbReference type="GO" id="GO:0039654">
    <property type="term" value="P:fusion of virus membrane with host endosome membrane"/>
    <property type="evidence" value="ECO:0007669"/>
    <property type="project" value="UniProtKB-KW"/>
</dbReference>
<dbReference type="GO" id="GO:0019064">
    <property type="term" value="P:fusion of virus membrane with host plasma membrane"/>
    <property type="evidence" value="ECO:0007669"/>
    <property type="project" value="InterPro"/>
</dbReference>
<dbReference type="GO" id="GO:0019062">
    <property type="term" value="P:virion attachment to host cell"/>
    <property type="evidence" value="ECO:0007669"/>
    <property type="project" value="UniProtKB-KW"/>
</dbReference>
<dbReference type="Gene3D" id="3.90.209.20">
    <property type="match status" value="1"/>
</dbReference>
<dbReference type="Gene3D" id="2.10.77.10">
    <property type="entry name" value="Hemagglutinin Chain A, Domain 2"/>
    <property type="match status" value="1"/>
</dbReference>
<dbReference type="InterPro" id="IPR008980">
    <property type="entry name" value="Capsid_hemagglutn"/>
</dbReference>
<dbReference type="InterPro" id="IPR013828">
    <property type="entry name" value="Hemagglutn_HA1_a/b_dom_sf"/>
</dbReference>
<dbReference type="InterPro" id="IPR000149">
    <property type="entry name" value="Hemagglutn_influenz_A"/>
</dbReference>
<dbReference type="InterPro" id="IPR001364">
    <property type="entry name" value="Hemagglutn_influenz_A/B"/>
</dbReference>
<dbReference type="Pfam" id="PF00509">
    <property type="entry name" value="Hemagglutinin"/>
    <property type="match status" value="1"/>
</dbReference>
<dbReference type="PRINTS" id="PR00330">
    <property type="entry name" value="HEMAGGLUTN1"/>
</dbReference>
<dbReference type="PRINTS" id="PR00329">
    <property type="entry name" value="HEMAGGLUTN12"/>
</dbReference>
<dbReference type="SUPFAM" id="SSF49818">
    <property type="entry name" value="Viral protein domain"/>
    <property type="match status" value="1"/>
</dbReference>
<keyword id="KW-1167">Clathrin- and caveolin-independent endocytosis of virus by host</keyword>
<keyword id="KW-1165">Clathrin-mediated endocytosis of virus by host</keyword>
<keyword id="KW-1015">Disulfide bond</keyword>
<keyword id="KW-1170">Fusion of virus membrane with host endosomal membrane</keyword>
<keyword id="KW-1168">Fusion of virus membrane with host membrane</keyword>
<keyword id="KW-0325">Glycoprotein</keyword>
<keyword id="KW-0348">Hemagglutinin</keyword>
<keyword id="KW-1032">Host cell membrane</keyword>
<keyword id="KW-1043">Host membrane</keyword>
<keyword id="KW-0945">Host-virus interaction</keyword>
<keyword id="KW-0449">Lipoprotein</keyword>
<keyword id="KW-0472">Membrane</keyword>
<keyword id="KW-0564">Palmitate</keyword>
<keyword id="KW-0732">Signal</keyword>
<keyword id="KW-1161">Viral attachment to host cell</keyword>
<keyword id="KW-0261">Viral envelope protein</keyword>
<keyword id="KW-1162">Viral penetration into host cytoplasm</keyword>
<keyword id="KW-0946">Virion</keyword>
<keyword id="KW-1164">Virus endocytosis by host</keyword>
<keyword id="KW-1160">Virus entry into host cell</keyword>
<name>HEMA_I60A0</name>